<evidence type="ECO:0000255" key="1">
    <source>
        <dbReference type="HAMAP-Rule" id="MF_00191"/>
    </source>
</evidence>
<comment type="function">
    <text evidence="1">Catalyzes the conversion of 1-hydroxy-2-methyl-2-(E)-butenyl 4-diphosphate (HMBPP) into a mixture of isopentenyl diphosphate (IPP) and dimethylallyl diphosphate (DMAPP). Acts in the terminal step of the DOXP/MEP pathway for isoprenoid precursor biosynthesis.</text>
</comment>
<comment type="catalytic activity">
    <reaction evidence="1">
        <text>isopentenyl diphosphate + 2 oxidized [2Fe-2S]-[ferredoxin] + H2O = (2E)-4-hydroxy-3-methylbut-2-enyl diphosphate + 2 reduced [2Fe-2S]-[ferredoxin] + 2 H(+)</text>
        <dbReference type="Rhea" id="RHEA:24488"/>
        <dbReference type="Rhea" id="RHEA-COMP:10000"/>
        <dbReference type="Rhea" id="RHEA-COMP:10001"/>
        <dbReference type="ChEBI" id="CHEBI:15377"/>
        <dbReference type="ChEBI" id="CHEBI:15378"/>
        <dbReference type="ChEBI" id="CHEBI:33737"/>
        <dbReference type="ChEBI" id="CHEBI:33738"/>
        <dbReference type="ChEBI" id="CHEBI:128753"/>
        <dbReference type="ChEBI" id="CHEBI:128769"/>
        <dbReference type="EC" id="1.17.7.4"/>
    </reaction>
</comment>
<comment type="catalytic activity">
    <reaction evidence="1">
        <text>dimethylallyl diphosphate + 2 oxidized [2Fe-2S]-[ferredoxin] + H2O = (2E)-4-hydroxy-3-methylbut-2-enyl diphosphate + 2 reduced [2Fe-2S]-[ferredoxin] + 2 H(+)</text>
        <dbReference type="Rhea" id="RHEA:24825"/>
        <dbReference type="Rhea" id="RHEA-COMP:10000"/>
        <dbReference type="Rhea" id="RHEA-COMP:10001"/>
        <dbReference type="ChEBI" id="CHEBI:15377"/>
        <dbReference type="ChEBI" id="CHEBI:15378"/>
        <dbReference type="ChEBI" id="CHEBI:33737"/>
        <dbReference type="ChEBI" id="CHEBI:33738"/>
        <dbReference type="ChEBI" id="CHEBI:57623"/>
        <dbReference type="ChEBI" id="CHEBI:128753"/>
        <dbReference type="EC" id="1.17.7.4"/>
    </reaction>
</comment>
<comment type="cofactor">
    <cofactor evidence="1">
        <name>[4Fe-4S] cluster</name>
        <dbReference type="ChEBI" id="CHEBI:49883"/>
    </cofactor>
    <text evidence="1">Binds 1 [4Fe-4S] cluster per subunit.</text>
</comment>
<comment type="pathway">
    <text evidence="1">Isoprenoid biosynthesis; dimethylallyl diphosphate biosynthesis; dimethylallyl diphosphate from (2E)-4-hydroxy-3-methylbutenyl diphosphate: step 1/1.</text>
</comment>
<comment type="pathway">
    <text evidence="1">Isoprenoid biosynthesis; isopentenyl diphosphate biosynthesis via DXP pathway; isopentenyl diphosphate from 1-deoxy-D-xylulose 5-phosphate: step 6/6.</text>
</comment>
<comment type="similarity">
    <text evidence="1">Belongs to the IspH family.</text>
</comment>
<reference key="1">
    <citation type="journal article" date="2006" name="Proc. Natl. Acad. Sci. U.S.A.">
        <title>The complete genome sequence of a chronic atrophic gastritis Helicobacter pylori strain: evolution during disease progression.</title>
        <authorList>
            <person name="Oh J.D."/>
            <person name="Kling-Baeckhed H."/>
            <person name="Giannakis M."/>
            <person name="Xu J."/>
            <person name="Fulton R.S."/>
            <person name="Fulton L.A."/>
            <person name="Cordum H.S."/>
            <person name="Wang C."/>
            <person name="Elliott G."/>
            <person name="Edwards J."/>
            <person name="Mardis E.R."/>
            <person name="Engstrand L.G."/>
            <person name="Gordon J.I."/>
        </authorList>
    </citation>
    <scope>NUCLEOTIDE SEQUENCE [LARGE SCALE GENOMIC DNA]</scope>
    <source>
        <strain>HPAG1</strain>
    </source>
</reference>
<name>ISPH_HELPH</name>
<gene>
    <name evidence="1" type="primary">ispH</name>
    <name type="ordered locus">HPAG1_0992</name>
</gene>
<sequence length="274" mass="30917">MEIKMAKDYGFCFGVKRAIQIAEKNQNSLIFGSLIHNAKEINRLEKNFNVKIEEDPKKIPKNKSVIIRTHGIPKQDLEYLKNKGVKITDATCPYVIKPQQIVESMSKEGYQIVLFGDINHPEVKGVISYATNQALVVNSLEELQEKKLQRKVALVSQTTKQTPKLLQIASYLVERCTEVRIFNTICNATSYNQKAALDLSKEVDIMIVVGGKTSSNTKQLLSIAKQHCKDSYLVEDENELELAWFKDKKLCGITAGASTPDWIIENVKQKISTI</sequence>
<dbReference type="EC" id="1.17.7.4" evidence="1"/>
<dbReference type="EMBL" id="CP000241">
    <property type="protein sequence ID" value="ABF85059.1"/>
    <property type="molecule type" value="Genomic_DNA"/>
</dbReference>
<dbReference type="RefSeq" id="WP_000403575.1">
    <property type="nucleotide sequence ID" value="NC_008086.1"/>
</dbReference>
<dbReference type="SMR" id="Q1CSL3"/>
<dbReference type="KEGG" id="hpa:HPAG1_0992"/>
<dbReference type="HOGENOM" id="CLU_027486_0_1_7"/>
<dbReference type="UniPathway" id="UPA00056">
    <property type="reaction ID" value="UER00097"/>
</dbReference>
<dbReference type="UniPathway" id="UPA00059">
    <property type="reaction ID" value="UER00105"/>
</dbReference>
<dbReference type="GO" id="GO:0051539">
    <property type="term" value="F:4 iron, 4 sulfur cluster binding"/>
    <property type="evidence" value="ECO:0007669"/>
    <property type="project" value="UniProtKB-UniRule"/>
</dbReference>
<dbReference type="GO" id="GO:0051745">
    <property type="term" value="F:4-hydroxy-3-methylbut-2-enyl diphosphate reductase activity"/>
    <property type="evidence" value="ECO:0007669"/>
    <property type="project" value="UniProtKB-UniRule"/>
</dbReference>
<dbReference type="GO" id="GO:0046872">
    <property type="term" value="F:metal ion binding"/>
    <property type="evidence" value="ECO:0007669"/>
    <property type="project" value="UniProtKB-KW"/>
</dbReference>
<dbReference type="GO" id="GO:0050992">
    <property type="term" value="P:dimethylallyl diphosphate biosynthetic process"/>
    <property type="evidence" value="ECO:0007669"/>
    <property type="project" value="UniProtKB-UniRule"/>
</dbReference>
<dbReference type="GO" id="GO:0019288">
    <property type="term" value="P:isopentenyl diphosphate biosynthetic process, methylerythritol 4-phosphate pathway"/>
    <property type="evidence" value="ECO:0007669"/>
    <property type="project" value="UniProtKB-UniRule"/>
</dbReference>
<dbReference type="GO" id="GO:0016114">
    <property type="term" value="P:terpenoid biosynthetic process"/>
    <property type="evidence" value="ECO:0007669"/>
    <property type="project" value="UniProtKB-UniRule"/>
</dbReference>
<dbReference type="CDD" id="cd13944">
    <property type="entry name" value="lytB_ispH"/>
    <property type="match status" value="1"/>
</dbReference>
<dbReference type="Gene3D" id="3.40.50.11270">
    <property type="match status" value="1"/>
</dbReference>
<dbReference type="Gene3D" id="3.40.1010.20">
    <property type="entry name" value="4-hydroxy-3-methylbut-2-enyl diphosphate reductase, catalytic domain"/>
    <property type="match status" value="2"/>
</dbReference>
<dbReference type="HAMAP" id="MF_00191">
    <property type="entry name" value="IspH"/>
    <property type="match status" value="1"/>
</dbReference>
<dbReference type="InterPro" id="IPR003451">
    <property type="entry name" value="LytB/IspH"/>
</dbReference>
<dbReference type="NCBIfam" id="TIGR00216">
    <property type="entry name" value="ispH_lytB"/>
    <property type="match status" value="1"/>
</dbReference>
<dbReference type="NCBIfam" id="NF002187">
    <property type="entry name" value="PRK01045.1-1"/>
    <property type="match status" value="1"/>
</dbReference>
<dbReference type="PANTHER" id="PTHR30426">
    <property type="entry name" value="4-HYDROXY-3-METHYLBUT-2-ENYL DIPHOSPHATE REDUCTASE"/>
    <property type="match status" value="1"/>
</dbReference>
<dbReference type="PANTHER" id="PTHR30426:SF0">
    <property type="entry name" value="4-HYDROXY-3-METHYLBUT-2-ENYL DIPHOSPHATE REDUCTASE"/>
    <property type="match status" value="1"/>
</dbReference>
<dbReference type="Pfam" id="PF02401">
    <property type="entry name" value="LYTB"/>
    <property type="match status" value="1"/>
</dbReference>
<feature type="chain" id="PRO_1000021132" description="4-hydroxy-3-methylbut-2-enyl diphosphate reductase">
    <location>
        <begin position="1"/>
        <end position="274"/>
    </location>
</feature>
<feature type="active site" description="Proton donor" evidence="1">
    <location>
        <position position="122"/>
    </location>
</feature>
<feature type="binding site" evidence="1">
    <location>
        <position position="12"/>
    </location>
    <ligand>
        <name>[4Fe-4S] cluster</name>
        <dbReference type="ChEBI" id="CHEBI:49883"/>
    </ligand>
</feature>
<feature type="binding site" evidence="1">
    <location>
        <position position="36"/>
    </location>
    <ligand>
        <name>(2E)-4-hydroxy-3-methylbut-2-enyl diphosphate</name>
        <dbReference type="ChEBI" id="CHEBI:128753"/>
    </ligand>
</feature>
<feature type="binding site" evidence="1">
    <location>
        <position position="36"/>
    </location>
    <ligand>
        <name>dimethylallyl diphosphate</name>
        <dbReference type="ChEBI" id="CHEBI:57623"/>
    </ligand>
</feature>
<feature type="binding site" evidence="1">
    <location>
        <position position="36"/>
    </location>
    <ligand>
        <name>isopentenyl diphosphate</name>
        <dbReference type="ChEBI" id="CHEBI:128769"/>
    </ligand>
</feature>
<feature type="binding site" evidence="1">
    <location>
        <position position="70"/>
    </location>
    <ligand>
        <name>(2E)-4-hydroxy-3-methylbut-2-enyl diphosphate</name>
        <dbReference type="ChEBI" id="CHEBI:128753"/>
    </ligand>
</feature>
<feature type="binding site" evidence="1">
    <location>
        <position position="70"/>
    </location>
    <ligand>
        <name>dimethylallyl diphosphate</name>
        <dbReference type="ChEBI" id="CHEBI:57623"/>
    </ligand>
</feature>
<feature type="binding site" evidence="1">
    <location>
        <position position="70"/>
    </location>
    <ligand>
        <name>isopentenyl diphosphate</name>
        <dbReference type="ChEBI" id="CHEBI:128769"/>
    </ligand>
</feature>
<feature type="binding site" evidence="1">
    <location>
        <position position="92"/>
    </location>
    <ligand>
        <name>[4Fe-4S] cluster</name>
        <dbReference type="ChEBI" id="CHEBI:49883"/>
    </ligand>
</feature>
<feature type="binding site" evidence="1">
    <location>
        <position position="120"/>
    </location>
    <ligand>
        <name>(2E)-4-hydroxy-3-methylbut-2-enyl diphosphate</name>
        <dbReference type="ChEBI" id="CHEBI:128753"/>
    </ligand>
</feature>
<feature type="binding site" evidence="1">
    <location>
        <position position="120"/>
    </location>
    <ligand>
        <name>dimethylallyl diphosphate</name>
        <dbReference type="ChEBI" id="CHEBI:57623"/>
    </ligand>
</feature>
<feature type="binding site" evidence="1">
    <location>
        <position position="120"/>
    </location>
    <ligand>
        <name>isopentenyl diphosphate</name>
        <dbReference type="ChEBI" id="CHEBI:128769"/>
    </ligand>
</feature>
<feature type="binding site" evidence="1">
    <location>
        <position position="158"/>
    </location>
    <ligand>
        <name>(2E)-4-hydroxy-3-methylbut-2-enyl diphosphate</name>
        <dbReference type="ChEBI" id="CHEBI:128753"/>
    </ligand>
</feature>
<feature type="binding site" evidence="1">
    <location>
        <position position="186"/>
    </location>
    <ligand>
        <name>[4Fe-4S] cluster</name>
        <dbReference type="ChEBI" id="CHEBI:49883"/>
    </ligand>
</feature>
<feature type="binding site" evidence="1">
    <location>
        <position position="214"/>
    </location>
    <ligand>
        <name>(2E)-4-hydroxy-3-methylbut-2-enyl diphosphate</name>
        <dbReference type="ChEBI" id="CHEBI:128753"/>
    </ligand>
</feature>
<feature type="binding site" evidence="1">
    <location>
        <position position="214"/>
    </location>
    <ligand>
        <name>dimethylallyl diphosphate</name>
        <dbReference type="ChEBI" id="CHEBI:57623"/>
    </ligand>
</feature>
<feature type="binding site" evidence="1">
    <location>
        <position position="214"/>
    </location>
    <ligand>
        <name>isopentenyl diphosphate</name>
        <dbReference type="ChEBI" id="CHEBI:128769"/>
    </ligand>
</feature>
<feature type="binding site" evidence="1">
    <location>
        <position position="215"/>
    </location>
    <ligand>
        <name>(2E)-4-hydroxy-3-methylbut-2-enyl diphosphate</name>
        <dbReference type="ChEBI" id="CHEBI:128753"/>
    </ligand>
</feature>
<feature type="binding site" evidence="1">
    <location>
        <position position="215"/>
    </location>
    <ligand>
        <name>dimethylallyl diphosphate</name>
        <dbReference type="ChEBI" id="CHEBI:57623"/>
    </ligand>
</feature>
<feature type="binding site" evidence="1">
    <location>
        <position position="215"/>
    </location>
    <ligand>
        <name>isopentenyl diphosphate</name>
        <dbReference type="ChEBI" id="CHEBI:128769"/>
    </ligand>
</feature>
<feature type="binding site" evidence="1">
    <location>
        <position position="216"/>
    </location>
    <ligand>
        <name>(2E)-4-hydroxy-3-methylbut-2-enyl diphosphate</name>
        <dbReference type="ChEBI" id="CHEBI:128753"/>
    </ligand>
</feature>
<feature type="binding site" evidence="1">
    <location>
        <position position="216"/>
    </location>
    <ligand>
        <name>dimethylallyl diphosphate</name>
        <dbReference type="ChEBI" id="CHEBI:57623"/>
    </ligand>
</feature>
<feature type="binding site" evidence="1">
    <location>
        <position position="216"/>
    </location>
    <ligand>
        <name>isopentenyl diphosphate</name>
        <dbReference type="ChEBI" id="CHEBI:128769"/>
    </ligand>
</feature>
<feature type="binding site" evidence="1">
    <location>
        <position position="258"/>
    </location>
    <ligand>
        <name>(2E)-4-hydroxy-3-methylbut-2-enyl diphosphate</name>
        <dbReference type="ChEBI" id="CHEBI:128753"/>
    </ligand>
</feature>
<feature type="binding site" evidence="1">
    <location>
        <position position="258"/>
    </location>
    <ligand>
        <name>dimethylallyl diphosphate</name>
        <dbReference type="ChEBI" id="CHEBI:57623"/>
    </ligand>
</feature>
<feature type="binding site" evidence="1">
    <location>
        <position position="258"/>
    </location>
    <ligand>
        <name>isopentenyl diphosphate</name>
        <dbReference type="ChEBI" id="CHEBI:128769"/>
    </ligand>
</feature>
<organism>
    <name type="scientific">Helicobacter pylori (strain HPAG1)</name>
    <dbReference type="NCBI Taxonomy" id="357544"/>
    <lineage>
        <taxon>Bacteria</taxon>
        <taxon>Pseudomonadati</taxon>
        <taxon>Campylobacterota</taxon>
        <taxon>Epsilonproteobacteria</taxon>
        <taxon>Campylobacterales</taxon>
        <taxon>Helicobacteraceae</taxon>
        <taxon>Helicobacter</taxon>
    </lineage>
</organism>
<protein>
    <recommendedName>
        <fullName evidence="1">4-hydroxy-3-methylbut-2-enyl diphosphate reductase</fullName>
        <shortName evidence="1">HMBPP reductase</shortName>
        <ecNumber evidence="1">1.17.7.4</ecNumber>
    </recommendedName>
</protein>
<keyword id="KW-0004">4Fe-4S</keyword>
<keyword id="KW-0408">Iron</keyword>
<keyword id="KW-0411">Iron-sulfur</keyword>
<keyword id="KW-0414">Isoprene biosynthesis</keyword>
<keyword id="KW-0479">Metal-binding</keyword>
<keyword id="KW-0560">Oxidoreductase</keyword>
<accession>Q1CSL3</accession>
<proteinExistence type="inferred from homology"/>